<organism>
    <name type="scientific">Pelotomaculum thermopropionicum (strain DSM 13744 / JCM 10971 / SI)</name>
    <dbReference type="NCBI Taxonomy" id="370438"/>
    <lineage>
        <taxon>Bacteria</taxon>
        <taxon>Bacillati</taxon>
        <taxon>Bacillota</taxon>
        <taxon>Clostridia</taxon>
        <taxon>Eubacteriales</taxon>
        <taxon>Desulfotomaculaceae</taxon>
        <taxon>Pelotomaculum</taxon>
    </lineage>
</organism>
<reference key="1">
    <citation type="journal article" date="2008" name="Genome Res.">
        <title>The genome of Pelotomaculum thermopropionicum reveals niche-associated evolution in anaerobic microbiota.</title>
        <authorList>
            <person name="Kosaka T."/>
            <person name="Kato S."/>
            <person name="Shimoyama T."/>
            <person name="Ishii S."/>
            <person name="Abe T."/>
            <person name="Watanabe K."/>
        </authorList>
    </citation>
    <scope>NUCLEOTIDE SEQUENCE [LARGE SCALE GENOMIC DNA]</scope>
    <source>
        <strain>DSM 13744 / JCM 10971 / SI</strain>
    </source>
</reference>
<keyword id="KW-0460">Magnesium</keyword>
<keyword id="KW-0479">Metal-binding</keyword>
<keyword id="KW-1185">Reference proteome</keyword>
<keyword id="KW-0784">Thiamine biosynthesis</keyword>
<keyword id="KW-0808">Transferase</keyword>
<proteinExistence type="inferred from homology"/>
<accession>A5D4K4</accession>
<sequence length="218" mass="24015">MVRRRGLSGLLEADIYGITAWEYSLGRSNIEVVAQMIEAGIKVIQYREKERPARQKYEECLKIREMTREAGVTFIVNDHVDLALLVDADGVHLGQDDLPADRVRELVGDKMIIGLSTHSPAQARAAEKMGVDYIGVGPIFATKTKKDVCDPVGLEYLEFVVKNISLPFVAIGGIKEHNIAEVSSRGAKCIALVTEIVGAEDIKAKVRALRAIISRKED</sequence>
<comment type="function">
    <text evidence="1">Condenses 4-methyl-5-(beta-hydroxyethyl)thiazole monophosphate (THZ-P) and 2-methyl-4-amino-5-hydroxymethyl pyrimidine pyrophosphate (HMP-PP) to form thiamine monophosphate (TMP).</text>
</comment>
<comment type="catalytic activity">
    <reaction evidence="1">
        <text>2-[(2R,5Z)-2-carboxy-4-methylthiazol-5(2H)-ylidene]ethyl phosphate + 4-amino-2-methyl-5-(diphosphooxymethyl)pyrimidine + 2 H(+) = thiamine phosphate + CO2 + diphosphate</text>
        <dbReference type="Rhea" id="RHEA:47844"/>
        <dbReference type="ChEBI" id="CHEBI:15378"/>
        <dbReference type="ChEBI" id="CHEBI:16526"/>
        <dbReference type="ChEBI" id="CHEBI:33019"/>
        <dbReference type="ChEBI" id="CHEBI:37575"/>
        <dbReference type="ChEBI" id="CHEBI:57841"/>
        <dbReference type="ChEBI" id="CHEBI:62899"/>
        <dbReference type="EC" id="2.5.1.3"/>
    </reaction>
</comment>
<comment type="catalytic activity">
    <reaction evidence="1">
        <text>2-(2-carboxy-4-methylthiazol-5-yl)ethyl phosphate + 4-amino-2-methyl-5-(diphosphooxymethyl)pyrimidine + 2 H(+) = thiamine phosphate + CO2 + diphosphate</text>
        <dbReference type="Rhea" id="RHEA:47848"/>
        <dbReference type="ChEBI" id="CHEBI:15378"/>
        <dbReference type="ChEBI" id="CHEBI:16526"/>
        <dbReference type="ChEBI" id="CHEBI:33019"/>
        <dbReference type="ChEBI" id="CHEBI:37575"/>
        <dbReference type="ChEBI" id="CHEBI:57841"/>
        <dbReference type="ChEBI" id="CHEBI:62890"/>
        <dbReference type="EC" id="2.5.1.3"/>
    </reaction>
</comment>
<comment type="catalytic activity">
    <reaction evidence="1">
        <text>4-methyl-5-(2-phosphooxyethyl)-thiazole + 4-amino-2-methyl-5-(diphosphooxymethyl)pyrimidine + H(+) = thiamine phosphate + diphosphate</text>
        <dbReference type="Rhea" id="RHEA:22328"/>
        <dbReference type="ChEBI" id="CHEBI:15378"/>
        <dbReference type="ChEBI" id="CHEBI:33019"/>
        <dbReference type="ChEBI" id="CHEBI:37575"/>
        <dbReference type="ChEBI" id="CHEBI:57841"/>
        <dbReference type="ChEBI" id="CHEBI:58296"/>
        <dbReference type="EC" id="2.5.1.3"/>
    </reaction>
</comment>
<comment type="cofactor">
    <cofactor evidence="1">
        <name>Mg(2+)</name>
        <dbReference type="ChEBI" id="CHEBI:18420"/>
    </cofactor>
    <text evidence="1">Binds 1 Mg(2+) ion per subunit.</text>
</comment>
<comment type="pathway">
    <text evidence="1">Cofactor biosynthesis; thiamine diphosphate biosynthesis; thiamine phosphate from 4-amino-2-methyl-5-diphosphomethylpyrimidine and 4-methyl-5-(2-phosphoethyl)-thiazole: step 1/1.</text>
</comment>
<comment type="similarity">
    <text evidence="1">Belongs to the thiamine-phosphate synthase family.</text>
</comment>
<gene>
    <name evidence="1" type="primary">thiE</name>
    <name type="ordered locus">PTH_0643</name>
</gene>
<protein>
    <recommendedName>
        <fullName evidence="1">Thiamine-phosphate synthase</fullName>
        <shortName evidence="1">TP synthase</shortName>
        <shortName evidence="1">TPS</shortName>
        <ecNumber evidence="1">2.5.1.3</ecNumber>
    </recommendedName>
    <alternativeName>
        <fullName evidence="1">Thiamine-phosphate pyrophosphorylase</fullName>
        <shortName evidence="1">TMP pyrophosphorylase</shortName>
        <shortName evidence="1">TMP-PPase</shortName>
    </alternativeName>
</protein>
<dbReference type="EC" id="2.5.1.3" evidence="1"/>
<dbReference type="EMBL" id="AP009389">
    <property type="protein sequence ID" value="BAF58824.1"/>
    <property type="molecule type" value="Genomic_DNA"/>
</dbReference>
<dbReference type="SMR" id="A5D4K4"/>
<dbReference type="STRING" id="370438.PTH_0643"/>
<dbReference type="KEGG" id="pth:PTH_0643"/>
<dbReference type="eggNOG" id="COG0352">
    <property type="taxonomic scope" value="Bacteria"/>
</dbReference>
<dbReference type="HOGENOM" id="CLU_018272_3_2_9"/>
<dbReference type="UniPathway" id="UPA00060">
    <property type="reaction ID" value="UER00141"/>
</dbReference>
<dbReference type="Proteomes" id="UP000006556">
    <property type="component" value="Chromosome"/>
</dbReference>
<dbReference type="GO" id="GO:0005737">
    <property type="term" value="C:cytoplasm"/>
    <property type="evidence" value="ECO:0007669"/>
    <property type="project" value="TreeGrafter"/>
</dbReference>
<dbReference type="GO" id="GO:0000287">
    <property type="term" value="F:magnesium ion binding"/>
    <property type="evidence" value="ECO:0007669"/>
    <property type="project" value="UniProtKB-UniRule"/>
</dbReference>
<dbReference type="GO" id="GO:0004789">
    <property type="term" value="F:thiamine-phosphate diphosphorylase activity"/>
    <property type="evidence" value="ECO:0007669"/>
    <property type="project" value="UniProtKB-UniRule"/>
</dbReference>
<dbReference type="GO" id="GO:0009228">
    <property type="term" value="P:thiamine biosynthetic process"/>
    <property type="evidence" value="ECO:0007669"/>
    <property type="project" value="UniProtKB-KW"/>
</dbReference>
<dbReference type="GO" id="GO:0009229">
    <property type="term" value="P:thiamine diphosphate biosynthetic process"/>
    <property type="evidence" value="ECO:0007669"/>
    <property type="project" value="UniProtKB-UniRule"/>
</dbReference>
<dbReference type="CDD" id="cd00564">
    <property type="entry name" value="TMP_TenI"/>
    <property type="match status" value="1"/>
</dbReference>
<dbReference type="FunFam" id="3.20.20.70:FF:000096">
    <property type="entry name" value="Thiamine-phosphate synthase"/>
    <property type="match status" value="1"/>
</dbReference>
<dbReference type="Gene3D" id="3.20.20.70">
    <property type="entry name" value="Aldolase class I"/>
    <property type="match status" value="1"/>
</dbReference>
<dbReference type="HAMAP" id="MF_00097">
    <property type="entry name" value="TMP_synthase"/>
    <property type="match status" value="1"/>
</dbReference>
<dbReference type="InterPro" id="IPR013785">
    <property type="entry name" value="Aldolase_TIM"/>
</dbReference>
<dbReference type="InterPro" id="IPR036206">
    <property type="entry name" value="ThiamineP_synth_sf"/>
</dbReference>
<dbReference type="InterPro" id="IPR022998">
    <property type="entry name" value="ThiamineP_synth_TenI"/>
</dbReference>
<dbReference type="InterPro" id="IPR034291">
    <property type="entry name" value="TMP_synthase"/>
</dbReference>
<dbReference type="NCBIfam" id="TIGR00693">
    <property type="entry name" value="thiE"/>
    <property type="match status" value="1"/>
</dbReference>
<dbReference type="PANTHER" id="PTHR20857">
    <property type="entry name" value="THIAMINE-PHOSPHATE PYROPHOSPHORYLASE"/>
    <property type="match status" value="1"/>
</dbReference>
<dbReference type="PANTHER" id="PTHR20857:SF15">
    <property type="entry name" value="THIAMINE-PHOSPHATE SYNTHASE"/>
    <property type="match status" value="1"/>
</dbReference>
<dbReference type="Pfam" id="PF02581">
    <property type="entry name" value="TMP-TENI"/>
    <property type="match status" value="1"/>
</dbReference>
<dbReference type="SUPFAM" id="SSF51391">
    <property type="entry name" value="Thiamin phosphate synthase"/>
    <property type="match status" value="1"/>
</dbReference>
<evidence type="ECO:0000255" key="1">
    <source>
        <dbReference type="HAMAP-Rule" id="MF_00097"/>
    </source>
</evidence>
<feature type="chain" id="PRO_0000336418" description="Thiamine-phosphate synthase">
    <location>
        <begin position="1"/>
        <end position="218"/>
    </location>
</feature>
<feature type="binding site" evidence="1">
    <location>
        <begin position="45"/>
        <end position="49"/>
    </location>
    <ligand>
        <name>4-amino-2-methyl-5-(diphosphooxymethyl)pyrimidine</name>
        <dbReference type="ChEBI" id="CHEBI:57841"/>
    </ligand>
</feature>
<feature type="binding site" evidence="1">
    <location>
        <position position="77"/>
    </location>
    <ligand>
        <name>4-amino-2-methyl-5-(diphosphooxymethyl)pyrimidine</name>
        <dbReference type="ChEBI" id="CHEBI:57841"/>
    </ligand>
</feature>
<feature type="binding site" evidence="1">
    <location>
        <position position="78"/>
    </location>
    <ligand>
        <name>Mg(2+)</name>
        <dbReference type="ChEBI" id="CHEBI:18420"/>
    </ligand>
</feature>
<feature type="binding site" evidence="1">
    <location>
        <position position="97"/>
    </location>
    <ligand>
        <name>Mg(2+)</name>
        <dbReference type="ChEBI" id="CHEBI:18420"/>
    </ligand>
</feature>
<feature type="binding site" evidence="1">
    <location>
        <position position="116"/>
    </location>
    <ligand>
        <name>4-amino-2-methyl-5-(diphosphooxymethyl)pyrimidine</name>
        <dbReference type="ChEBI" id="CHEBI:57841"/>
    </ligand>
</feature>
<feature type="binding site" evidence="1">
    <location>
        <begin position="142"/>
        <end position="144"/>
    </location>
    <ligand>
        <name>2-[(2R,5Z)-2-carboxy-4-methylthiazol-5(2H)-ylidene]ethyl phosphate</name>
        <dbReference type="ChEBI" id="CHEBI:62899"/>
    </ligand>
</feature>
<feature type="binding site" evidence="1">
    <location>
        <position position="145"/>
    </location>
    <ligand>
        <name>4-amino-2-methyl-5-(diphosphooxymethyl)pyrimidine</name>
        <dbReference type="ChEBI" id="CHEBI:57841"/>
    </ligand>
</feature>
<feature type="binding site" evidence="1">
    <location>
        <position position="173"/>
    </location>
    <ligand>
        <name>2-[(2R,5Z)-2-carboxy-4-methylthiazol-5(2H)-ylidene]ethyl phosphate</name>
        <dbReference type="ChEBI" id="CHEBI:62899"/>
    </ligand>
</feature>
<feature type="binding site" evidence="1">
    <location>
        <begin position="193"/>
        <end position="194"/>
    </location>
    <ligand>
        <name>2-[(2R,5Z)-2-carboxy-4-methylthiazol-5(2H)-ylidene]ethyl phosphate</name>
        <dbReference type="ChEBI" id="CHEBI:62899"/>
    </ligand>
</feature>
<name>THIE_PELTS</name>